<accession>B6IXD4</accession>
<organism>
    <name type="scientific">Rhodospirillum centenum (strain ATCC 51521 / SW)</name>
    <dbReference type="NCBI Taxonomy" id="414684"/>
    <lineage>
        <taxon>Bacteria</taxon>
        <taxon>Pseudomonadati</taxon>
        <taxon>Pseudomonadota</taxon>
        <taxon>Alphaproteobacteria</taxon>
        <taxon>Rhodospirillales</taxon>
        <taxon>Rhodospirillaceae</taxon>
        <taxon>Rhodospirillum</taxon>
    </lineage>
</organism>
<reference key="1">
    <citation type="submission" date="2007-03" db="EMBL/GenBank/DDBJ databases">
        <title>Genome sequence of Rhodospirillum centenum.</title>
        <authorList>
            <person name="Touchman J.W."/>
            <person name="Bauer C."/>
            <person name="Blankenship R.E."/>
        </authorList>
    </citation>
    <scope>NUCLEOTIDE SEQUENCE [LARGE SCALE GENOMIC DNA]</scope>
    <source>
        <strain>ATCC 51521 / SW</strain>
    </source>
</reference>
<keyword id="KW-0963">Cytoplasm</keyword>
<keyword id="KW-0269">Exonuclease</keyword>
<keyword id="KW-0378">Hydrolase</keyword>
<keyword id="KW-0540">Nuclease</keyword>
<keyword id="KW-1185">Reference proteome</keyword>
<proteinExistence type="inferred from homology"/>
<gene>
    <name evidence="1" type="primary">xseA</name>
    <name type="ordered locus">RC1_3609</name>
</gene>
<name>EX7L_RHOCS</name>
<comment type="function">
    <text evidence="1">Bidirectionally degrades single-stranded DNA into large acid-insoluble oligonucleotides, which are then degraded further into small acid-soluble oligonucleotides.</text>
</comment>
<comment type="catalytic activity">
    <reaction evidence="1">
        <text>Exonucleolytic cleavage in either 5'- to 3'- or 3'- to 5'-direction to yield nucleoside 5'-phosphates.</text>
        <dbReference type="EC" id="3.1.11.6"/>
    </reaction>
</comment>
<comment type="subunit">
    <text evidence="1">Heterooligomer composed of large and small subunits.</text>
</comment>
<comment type="subcellular location">
    <subcellularLocation>
        <location evidence="1">Cytoplasm</location>
    </subcellularLocation>
</comment>
<comment type="similarity">
    <text evidence="1">Belongs to the XseA family.</text>
</comment>
<evidence type="ECO:0000255" key="1">
    <source>
        <dbReference type="HAMAP-Rule" id="MF_00378"/>
    </source>
</evidence>
<evidence type="ECO:0000256" key="2">
    <source>
        <dbReference type="SAM" id="MobiDB-lite"/>
    </source>
</evidence>
<dbReference type="EC" id="3.1.11.6" evidence="1"/>
<dbReference type="EMBL" id="CP000613">
    <property type="protein sequence ID" value="ACJ00958.1"/>
    <property type="molecule type" value="Genomic_DNA"/>
</dbReference>
<dbReference type="RefSeq" id="WP_012568734.1">
    <property type="nucleotide sequence ID" value="NC_011420.2"/>
</dbReference>
<dbReference type="SMR" id="B6IXD4"/>
<dbReference type="STRING" id="414684.RC1_3609"/>
<dbReference type="KEGG" id="rce:RC1_3609"/>
<dbReference type="eggNOG" id="COG1570">
    <property type="taxonomic scope" value="Bacteria"/>
</dbReference>
<dbReference type="HOGENOM" id="CLU_023625_3_1_5"/>
<dbReference type="OrthoDB" id="9802795at2"/>
<dbReference type="Proteomes" id="UP000001591">
    <property type="component" value="Chromosome"/>
</dbReference>
<dbReference type="GO" id="GO:0005737">
    <property type="term" value="C:cytoplasm"/>
    <property type="evidence" value="ECO:0007669"/>
    <property type="project" value="UniProtKB-SubCell"/>
</dbReference>
<dbReference type="GO" id="GO:0009318">
    <property type="term" value="C:exodeoxyribonuclease VII complex"/>
    <property type="evidence" value="ECO:0007669"/>
    <property type="project" value="InterPro"/>
</dbReference>
<dbReference type="GO" id="GO:0008855">
    <property type="term" value="F:exodeoxyribonuclease VII activity"/>
    <property type="evidence" value="ECO:0007669"/>
    <property type="project" value="UniProtKB-UniRule"/>
</dbReference>
<dbReference type="GO" id="GO:0003676">
    <property type="term" value="F:nucleic acid binding"/>
    <property type="evidence" value="ECO:0007669"/>
    <property type="project" value="InterPro"/>
</dbReference>
<dbReference type="GO" id="GO:0006308">
    <property type="term" value="P:DNA catabolic process"/>
    <property type="evidence" value="ECO:0007669"/>
    <property type="project" value="UniProtKB-UniRule"/>
</dbReference>
<dbReference type="CDD" id="cd04489">
    <property type="entry name" value="ExoVII_LU_OBF"/>
    <property type="match status" value="1"/>
</dbReference>
<dbReference type="HAMAP" id="MF_00378">
    <property type="entry name" value="Exonuc_7_L"/>
    <property type="match status" value="1"/>
</dbReference>
<dbReference type="InterPro" id="IPR003753">
    <property type="entry name" value="Exonuc_VII_L"/>
</dbReference>
<dbReference type="InterPro" id="IPR020579">
    <property type="entry name" value="Exonuc_VII_lsu_C"/>
</dbReference>
<dbReference type="InterPro" id="IPR025824">
    <property type="entry name" value="OB-fold_nuc-bd_dom"/>
</dbReference>
<dbReference type="NCBIfam" id="TIGR00237">
    <property type="entry name" value="xseA"/>
    <property type="match status" value="1"/>
</dbReference>
<dbReference type="PANTHER" id="PTHR30008">
    <property type="entry name" value="EXODEOXYRIBONUCLEASE 7 LARGE SUBUNIT"/>
    <property type="match status" value="1"/>
</dbReference>
<dbReference type="PANTHER" id="PTHR30008:SF0">
    <property type="entry name" value="EXODEOXYRIBONUCLEASE 7 LARGE SUBUNIT"/>
    <property type="match status" value="1"/>
</dbReference>
<dbReference type="Pfam" id="PF02601">
    <property type="entry name" value="Exonuc_VII_L"/>
    <property type="match status" value="2"/>
</dbReference>
<dbReference type="Pfam" id="PF13742">
    <property type="entry name" value="tRNA_anti_2"/>
    <property type="match status" value="1"/>
</dbReference>
<protein>
    <recommendedName>
        <fullName evidence="1">Exodeoxyribonuclease 7 large subunit</fullName>
        <ecNumber evidence="1">3.1.11.6</ecNumber>
    </recommendedName>
    <alternativeName>
        <fullName evidence="1">Exodeoxyribonuclease VII large subunit</fullName>
        <shortName evidence="1">Exonuclease VII large subunit</shortName>
    </alternativeName>
</protein>
<feature type="chain" id="PRO_1000205681" description="Exodeoxyribonuclease 7 large subunit">
    <location>
        <begin position="1"/>
        <end position="523"/>
    </location>
</feature>
<feature type="region of interest" description="Disordered" evidence="2">
    <location>
        <begin position="502"/>
        <end position="523"/>
    </location>
</feature>
<sequence length="523" mass="56353">MSYDPADLPPRTGSNLPEMSVGDLARALKRTVEDAYGYVRVRGEISQPKRHSSGHVYLRLKDETAVLEAVCWKGVAARLSVRPEEGMEVVCTGRLTTYPGRSQYQLVIETMELAGEGALLKMLEERKRRLAAEGLFAPERKKPLPFLPEVIGVVTSPTGAVIRDILHRLADRFPRHVLLWPVAVQGEGAADQVARAIAGFNAIAPGGPVPRPDLIIVARGGGSLEDLMPFNEEAVVRAAAASAIPLISAVGHETDTTLIDFASDRRAPTPTAAAEMAVPVRTELLAQVLDDGRRLHQCLSRAIDTRRSHVEGLGRGLGDPRALLEGCIQRLDDRAERLELSLRTGLERRHAAVQQLGIRLRHPREVIGLAAARADAAGRALRAGFDRAVTVEQGRFHRVADRLSPLPLRRQIDAGRDRLDALPPRLAQAHARRLDQAGQRLVALGQLLESYSYKGVLERGFVLVADAEGRPVTRAADTAPGQPVALRFADGTVGAVVDGAAPGASPAARTRAGKAKADQGSLF</sequence>